<gene>
    <name evidence="1" type="primary">murD</name>
    <name type="ordered locus">Mvan_3525</name>
</gene>
<organism>
    <name type="scientific">Mycolicibacterium vanbaalenii (strain DSM 7251 / JCM 13017 / BCRC 16820 / KCTC 9966 / NRRL B-24157 / PYR-1)</name>
    <name type="common">Mycobacterium vanbaalenii</name>
    <dbReference type="NCBI Taxonomy" id="350058"/>
    <lineage>
        <taxon>Bacteria</taxon>
        <taxon>Bacillati</taxon>
        <taxon>Actinomycetota</taxon>
        <taxon>Actinomycetes</taxon>
        <taxon>Mycobacteriales</taxon>
        <taxon>Mycobacteriaceae</taxon>
        <taxon>Mycolicibacterium</taxon>
    </lineage>
</organism>
<keyword id="KW-0067">ATP-binding</keyword>
<keyword id="KW-0131">Cell cycle</keyword>
<keyword id="KW-0132">Cell division</keyword>
<keyword id="KW-0133">Cell shape</keyword>
<keyword id="KW-0961">Cell wall biogenesis/degradation</keyword>
<keyword id="KW-0963">Cytoplasm</keyword>
<keyword id="KW-0436">Ligase</keyword>
<keyword id="KW-0547">Nucleotide-binding</keyword>
<keyword id="KW-0573">Peptidoglycan synthesis</keyword>
<evidence type="ECO:0000255" key="1">
    <source>
        <dbReference type="HAMAP-Rule" id="MF_00639"/>
    </source>
</evidence>
<reference key="1">
    <citation type="submission" date="2006-12" db="EMBL/GenBank/DDBJ databases">
        <title>Complete sequence of Mycobacterium vanbaalenii PYR-1.</title>
        <authorList>
            <consortium name="US DOE Joint Genome Institute"/>
            <person name="Copeland A."/>
            <person name="Lucas S."/>
            <person name="Lapidus A."/>
            <person name="Barry K."/>
            <person name="Detter J.C."/>
            <person name="Glavina del Rio T."/>
            <person name="Hammon N."/>
            <person name="Israni S."/>
            <person name="Dalin E."/>
            <person name="Tice H."/>
            <person name="Pitluck S."/>
            <person name="Singan V."/>
            <person name="Schmutz J."/>
            <person name="Larimer F."/>
            <person name="Land M."/>
            <person name="Hauser L."/>
            <person name="Kyrpides N."/>
            <person name="Anderson I.J."/>
            <person name="Miller C."/>
            <person name="Richardson P."/>
        </authorList>
    </citation>
    <scope>NUCLEOTIDE SEQUENCE [LARGE SCALE GENOMIC DNA]</scope>
    <source>
        <strain>DSM 7251 / JCM 13017 / BCRC 16820 / KCTC 9966 / NRRL B-24157 / PYR-1</strain>
    </source>
</reference>
<protein>
    <recommendedName>
        <fullName evidence="1">UDP-N-acetylmuramoylalanine--D-glutamate ligase</fullName>
        <ecNumber evidence="1">6.3.2.9</ecNumber>
    </recommendedName>
    <alternativeName>
        <fullName evidence="1">D-glutamic acid-adding enzyme</fullName>
    </alternativeName>
    <alternativeName>
        <fullName evidence="1">UDP-N-acetylmuramoyl-L-alanyl-D-glutamate synthetase</fullName>
    </alternativeName>
</protein>
<sequence>MQPISPGAAVLVVGAGITGRAVLAALAPLGARATLTDDSPTALTASAQQRVEVLDPATAVDRIADFDLVVVSPGIPPTAPIPVAAAAAGIPVWGDVELAWHLDRSGRFGPPRQWLVVTGTNGKTTTTSMLYAMLQAGGRRAVLCGNIGDPVLSQLDRPADVLAVELSSFQLHWAPSLRPEAGAVLNVAEDHLDWHGSMAAYAGDKARALTGRVAVGGLDDAIAAGLLADAPAPVKVGFRLGDPGPGEFGVRDGVLIDNAFGRDLALADADTIPVAGPVGVLDALAAAALARAVDVPAAAIAEALATFHVGRHRAEVVAVADGITYVDDSKATNPHAAQASVSAFPRVVWVAGGLLKGASVDEMVEATKDRLVGVVLIGRDRAIVGNALSRHAPDVPVVELVTGEDSVVLEKDESGVTRVTRVIQTGDRTLADAVMTAAVDAARGLATSGDTVLLAPAGASFDQFTGYGHRGDAFAAAVRAAIR</sequence>
<dbReference type="EC" id="6.3.2.9" evidence="1"/>
<dbReference type="EMBL" id="CP000511">
    <property type="protein sequence ID" value="ABM14320.1"/>
    <property type="molecule type" value="Genomic_DNA"/>
</dbReference>
<dbReference type="RefSeq" id="WP_011780724.1">
    <property type="nucleotide sequence ID" value="NZ_JACKSD010000138.1"/>
</dbReference>
<dbReference type="SMR" id="A1TAX0"/>
<dbReference type="STRING" id="350058.Mvan_3525"/>
<dbReference type="KEGG" id="mva:Mvan_3525"/>
<dbReference type="eggNOG" id="COG0771">
    <property type="taxonomic scope" value="Bacteria"/>
</dbReference>
<dbReference type="HOGENOM" id="CLU_032540_0_0_11"/>
<dbReference type="UniPathway" id="UPA00219"/>
<dbReference type="Proteomes" id="UP000009159">
    <property type="component" value="Chromosome"/>
</dbReference>
<dbReference type="GO" id="GO:0005737">
    <property type="term" value="C:cytoplasm"/>
    <property type="evidence" value="ECO:0007669"/>
    <property type="project" value="UniProtKB-SubCell"/>
</dbReference>
<dbReference type="GO" id="GO:0005524">
    <property type="term" value="F:ATP binding"/>
    <property type="evidence" value="ECO:0007669"/>
    <property type="project" value="UniProtKB-UniRule"/>
</dbReference>
<dbReference type="GO" id="GO:0008764">
    <property type="term" value="F:UDP-N-acetylmuramoylalanine-D-glutamate ligase activity"/>
    <property type="evidence" value="ECO:0007669"/>
    <property type="project" value="UniProtKB-UniRule"/>
</dbReference>
<dbReference type="GO" id="GO:0051301">
    <property type="term" value="P:cell division"/>
    <property type="evidence" value="ECO:0007669"/>
    <property type="project" value="UniProtKB-KW"/>
</dbReference>
<dbReference type="GO" id="GO:0071555">
    <property type="term" value="P:cell wall organization"/>
    <property type="evidence" value="ECO:0007669"/>
    <property type="project" value="UniProtKB-KW"/>
</dbReference>
<dbReference type="GO" id="GO:0009252">
    <property type="term" value="P:peptidoglycan biosynthetic process"/>
    <property type="evidence" value="ECO:0007669"/>
    <property type="project" value="UniProtKB-UniRule"/>
</dbReference>
<dbReference type="GO" id="GO:0008360">
    <property type="term" value="P:regulation of cell shape"/>
    <property type="evidence" value="ECO:0007669"/>
    <property type="project" value="UniProtKB-KW"/>
</dbReference>
<dbReference type="Gene3D" id="3.90.190.20">
    <property type="entry name" value="Mur ligase, C-terminal domain"/>
    <property type="match status" value="1"/>
</dbReference>
<dbReference type="Gene3D" id="3.40.1190.10">
    <property type="entry name" value="Mur-like, catalytic domain"/>
    <property type="match status" value="1"/>
</dbReference>
<dbReference type="Gene3D" id="3.40.50.720">
    <property type="entry name" value="NAD(P)-binding Rossmann-like Domain"/>
    <property type="match status" value="1"/>
</dbReference>
<dbReference type="HAMAP" id="MF_00639">
    <property type="entry name" value="MurD"/>
    <property type="match status" value="1"/>
</dbReference>
<dbReference type="InterPro" id="IPR036565">
    <property type="entry name" value="Mur-like_cat_sf"/>
</dbReference>
<dbReference type="InterPro" id="IPR004101">
    <property type="entry name" value="Mur_ligase_C"/>
</dbReference>
<dbReference type="InterPro" id="IPR036615">
    <property type="entry name" value="Mur_ligase_C_dom_sf"/>
</dbReference>
<dbReference type="InterPro" id="IPR013221">
    <property type="entry name" value="Mur_ligase_cen"/>
</dbReference>
<dbReference type="InterPro" id="IPR005762">
    <property type="entry name" value="MurD"/>
</dbReference>
<dbReference type="NCBIfam" id="TIGR01087">
    <property type="entry name" value="murD"/>
    <property type="match status" value="1"/>
</dbReference>
<dbReference type="PANTHER" id="PTHR43692">
    <property type="entry name" value="UDP-N-ACETYLMURAMOYLALANINE--D-GLUTAMATE LIGASE"/>
    <property type="match status" value="1"/>
</dbReference>
<dbReference type="PANTHER" id="PTHR43692:SF1">
    <property type="entry name" value="UDP-N-ACETYLMURAMOYLALANINE--D-GLUTAMATE LIGASE"/>
    <property type="match status" value="1"/>
</dbReference>
<dbReference type="Pfam" id="PF02875">
    <property type="entry name" value="Mur_ligase_C"/>
    <property type="match status" value="1"/>
</dbReference>
<dbReference type="Pfam" id="PF08245">
    <property type="entry name" value="Mur_ligase_M"/>
    <property type="match status" value="1"/>
</dbReference>
<dbReference type="Pfam" id="PF21799">
    <property type="entry name" value="MurD-like_N"/>
    <property type="match status" value="1"/>
</dbReference>
<dbReference type="SUPFAM" id="SSF51984">
    <property type="entry name" value="MurCD N-terminal domain"/>
    <property type="match status" value="1"/>
</dbReference>
<dbReference type="SUPFAM" id="SSF53623">
    <property type="entry name" value="MurD-like peptide ligases, catalytic domain"/>
    <property type="match status" value="1"/>
</dbReference>
<dbReference type="SUPFAM" id="SSF53244">
    <property type="entry name" value="MurD-like peptide ligases, peptide-binding domain"/>
    <property type="match status" value="1"/>
</dbReference>
<accession>A1TAX0</accession>
<feature type="chain" id="PRO_0000301441" description="UDP-N-acetylmuramoylalanine--D-glutamate ligase">
    <location>
        <begin position="1"/>
        <end position="483"/>
    </location>
</feature>
<feature type="binding site" evidence="1">
    <location>
        <begin position="119"/>
        <end position="125"/>
    </location>
    <ligand>
        <name>ATP</name>
        <dbReference type="ChEBI" id="CHEBI:30616"/>
    </ligand>
</feature>
<proteinExistence type="inferred from homology"/>
<comment type="function">
    <text evidence="1">Cell wall formation. Catalyzes the addition of glutamate to the nucleotide precursor UDP-N-acetylmuramoyl-L-alanine (UMA).</text>
</comment>
<comment type="catalytic activity">
    <reaction evidence="1">
        <text>UDP-N-acetyl-alpha-D-muramoyl-L-alanine + D-glutamate + ATP = UDP-N-acetyl-alpha-D-muramoyl-L-alanyl-D-glutamate + ADP + phosphate + H(+)</text>
        <dbReference type="Rhea" id="RHEA:16429"/>
        <dbReference type="ChEBI" id="CHEBI:15378"/>
        <dbReference type="ChEBI" id="CHEBI:29986"/>
        <dbReference type="ChEBI" id="CHEBI:30616"/>
        <dbReference type="ChEBI" id="CHEBI:43474"/>
        <dbReference type="ChEBI" id="CHEBI:83898"/>
        <dbReference type="ChEBI" id="CHEBI:83900"/>
        <dbReference type="ChEBI" id="CHEBI:456216"/>
        <dbReference type="EC" id="6.3.2.9"/>
    </reaction>
</comment>
<comment type="pathway">
    <text evidence="1">Cell wall biogenesis; peptidoglycan biosynthesis.</text>
</comment>
<comment type="subcellular location">
    <subcellularLocation>
        <location evidence="1">Cytoplasm</location>
    </subcellularLocation>
</comment>
<comment type="similarity">
    <text evidence="1">Belongs to the MurCDEF family.</text>
</comment>
<name>MURD_MYCVP</name>